<gene>
    <name type="primary">V-RYK</name>
</gene>
<organism>
    <name type="scientific">Avian retrovirus RPL30</name>
    <dbReference type="NCBI Taxonomy" id="31671"/>
    <lineage>
        <taxon>Viruses</taxon>
        <taxon>Riboviria</taxon>
        <taxon>Pararnavirae</taxon>
        <taxon>Artverviricota</taxon>
        <taxon>Revtraviricetes</taxon>
        <taxon>Ortervirales</taxon>
        <taxon>Retroviridae</taxon>
        <taxon>Orthoretrovirinae</taxon>
        <taxon>Alpharetrovirus</taxon>
        <taxon>Avian leukosis virus</taxon>
    </lineage>
</organism>
<dbReference type="EC" id="2.7.10.1"/>
<dbReference type="EMBL" id="M92847">
    <property type="protein sequence ID" value="AAA42673.1"/>
    <property type="status" value="ALT_INIT"/>
    <property type="molecule type" value="mRNA"/>
</dbReference>
<dbReference type="PIR" id="B43362">
    <property type="entry name" value="B43362"/>
</dbReference>
<dbReference type="SMR" id="P33497"/>
<dbReference type="BRENDA" id="2.7.10.1">
    <property type="organism ID" value="598"/>
</dbReference>
<dbReference type="GO" id="GO:0020002">
    <property type="term" value="C:host cell plasma membrane"/>
    <property type="evidence" value="ECO:0007669"/>
    <property type="project" value="UniProtKB-SubCell"/>
</dbReference>
<dbReference type="GO" id="GO:0005886">
    <property type="term" value="C:plasma membrane"/>
    <property type="evidence" value="ECO:0007669"/>
    <property type="project" value="TreeGrafter"/>
</dbReference>
<dbReference type="GO" id="GO:0043235">
    <property type="term" value="C:receptor complex"/>
    <property type="evidence" value="ECO:0007669"/>
    <property type="project" value="TreeGrafter"/>
</dbReference>
<dbReference type="GO" id="GO:0005524">
    <property type="term" value="F:ATP binding"/>
    <property type="evidence" value="ECO:0007669"/>
    <property type="project" value="UniProtKB-KW"/>
</dbReference>
<dbReference type="GO" id="GO:0004714">
    <property type="term" value="F:transmembrane receptor protein tyrosine kinase activity"/>
    <property type="evidence" value="ECO:0007669"/>
    <property type="project" value="UniProtKB-EC"/>
</dbReference>
<dbReference type="GO" id="GO:0016477">
    <property type="term" value="P:cell migration"/>
    <property type="evidence" value="ECO:0007669"/>
    <property type="project" value="TreeGrafter"/>
</dbReference>
<dbReference type="GO" id="GO:0007169">
    <property type="term" value="P:cell surface receptor protein tyrosine kinase signaling pathway"/>
    <property type="evidence" value="ECO:0007669"/>
    <property type="project" value="TreeGrafter"/>
</dbReference>
<dbReference type="GO" id="GO:0006909">
    <property type="term" value="P:phagocytosis"/>
    <property type="evidence" value="ECO:0007669"/>
    <property type="project" value="TreeGrafter"/>
</dbReference>
<dbReference type="CDD" id="cd14204">
    <property type="entry name" value="PTKc_Mer"/>
    <property type="match status" value="1"/>
</dbReference>
<dbReference type="FunFam" id="1.10.510.10:FF:000089">
    <property type="entry name" value="Tyrosine-protein kinase receptor TYRO3"/>
    <property type="match status" value="1"/>
</dbReference>
<dbReference type="FunFam" id="3.30.200.20:FF:000111">
    <property type="entry name" value="Tyrosine-protein kinase receptor TYRO3"/>
    <property type="match status" value="1"/>
</dbReference>
<dbReference type="Gene3D" id="3.30.200.20">
    <property type="entry name" value="Phosphorylase Kinase, domain 1"/>
    <property type="match status" value="1"/>
</dbReference>
<dbReference type="Gene3D" id="1.10.510.10">
    <property type="entry name" value="Transferase(Phosphotransferase) domain 1"/>
    <property type="match status" value="1"/>
</dbReference>
<dbReference type="InterPro" id="IPR011009">
    <property type="entry name" value="Kinase-like_dom_sf"/>
</dbReference>
<dbReference type="InterPro" id="IPR000719">
    <property type="entry name" value="Prot_kinase_dom"/>
</dbReference>
<dbReference type="InterPro" id="IPR017441">
    <property type="entry name" value="Protein_kinase_ATP_BS"/>
</dbReference>
<dbReference type="InterPro" id="IPR050122">
    <property type="entry name" value="RTK"/>
</dbReference>
<dbReference type="InterPro" id="IPR001245">
    <property type="entry name" value="Ser-Thr/Tyr_kinase_cat_dom"/>
</dbReference>
<dbReference type="InterPro" id="IPR008266">
    <property type="entry name" value="Tyr_kinase_AS"/>
</dbReference>
<dbReference type="InterPro" id="IPR020635">
    <property type="entry name" value="Tyr_kinase_cat_dom"/>
</dbReference>
<dbReference type="PANTHER" id="PTHR24416:SF257">
    <property type="entry name" value="TYROSINE-PROTEIN KINASE MER"/>
    <property type="match status" value="1"/>
</dbReference>
<dbReference type="PANTHER" id="PTHR24416">
    <property type="entry name" value="TYROSINE-PROTEIN KINASE RECEPTOR"/>
    <property type="match status" value="1"/>
</dbReference>
<dbReference type="Pfam" id="PF07714">
    <property type="entry name" value="PK_Tyr_Ser-Thr"/>
    <property type="match status" value="1"/>
</dbReference>
<dbReference type="PRINTS" id="PR00109">
    <property type="entry name" value="TYRKINASE"/>
</dbReference>
<dbReference type="SMART" id="SM00219">
    <property type="entry name" value="TyrKc"/>
    <property type="match status" value="1"/>
</dbReference>
<dbReference type="SUPFAM" id="SSF56112">
    <property type="entry name" value="Protein kinase-like (PK-like)"/>
    <property type="match status" value="1"/>
</dbReference>
<dbReference type="PROSITE" id="PS00107">
    <property type="entry name" value="PROTEIN_KINASE_ATP"/>
    <property type="match status" value="1"/>
</dbReference>
<dbReference type="PROSITE" id="PS50011">
    <property type="entry name" value="PROTEIN_KINASE_DOM"/>
    <property type="match status" value="1"/>
</dbReference>
<dbReference type="PROSITE" id="PS00109">
    <property type="entry name" value="PROTEIN_KINASE_TYR"/>
    <property type="match status" value="1"/>
</dbReference>
<reference key="1">
    <citation type="journal article" date="1992" name="J. Virol.">
        <title>A novel oncogene, v-ryk, encoding a truncated receptor tyrosine kinase is transduced into the RPL30 virus without loss of viral sequences.</title>
        <authorList>
            <person name="Jia R."/>
            <person name="Mayer B.J."/>
            <person name="Hanafusa T."/>
            <person name="Hanafusa H."/>
        </authorList>
    </citation>
    <scope>NUCLEOTIDE SEQUENCE [MRNA]</scope>
</reference>
<evidence type="ECO:0000250" key="1"/>
<evidence type="ECO:0000255" key="2">
    <source>
        <dbReference type="PROSITE-ProRule" id="PRU00159"/>
    </source>
</evidence>
<evidence type="ECO:0000255" key="3">
    <source>
        <dbReference type="PROSITE-ProRule" id="PRU10028"/>
    </source>
</evidence>
<evidence type="ECO:0000305" key="4"/>
<proteinExistence type="evidence at transcript level"/>
<accession>P33497</accession>
<keyword id="KW-0067">ATP-binding</keyword>
<keyword id="KW-1032">Host cell membrane</keyword>
<keyword id="KW-1043">Host membrane</keyword>
<keyword id="KW-0418">Kinase</keyword>
<keyword id="KW-0472">Membrane</keyword>
<keyword id="KW-0547">Nucleotide-binding</keyword>
<keyword id="KW-0553">Oncogene</keyword>
<keyword id="KW-0597">Phosphoprotein</keyword>
<keyword id="KW-0808">Transferase</keyword>
<keyword id="KW-0829">Tyrosine-protein kinase</keyword>
<sequence>TTTVVNYTAKKSYCRRAVELTLGSLGVSSELQQKLQDVVIDRNALSLGKVLGEGEFGSVMEGRLSQPEGTPQKVAVKTMKLDNFSHREIEEFLSEAACIKDFDHPNVIKLLGVCIELSSQQIPKPMVVLPFMKYGDLHSFLLRSRLEMAPQFVPLQMLLKFMVDIALGMEYLSSRQFLHRDLAARNCMLRDDMTVCVADFGLSKKIYSGDYYRQGRIAKMPVKWIAIESLADRVYTTKSDVWAFGVTMWEIATRGMTPYPGVQNHEIYEYLFHGQRLKKPENCLDELYDIMSSCWRAEPADRPTFSQLKVHLEKLLESLPAPRGSKDVIYVNTSLPEESPDSTQDLGLDSVIPQADSDLDPGDIAEPCCSHTKAALVAVDIHDGGSRYVLESEGSPTEDAYVPQLPHEGSAWTEASTLPVGSSLAAQLPCADGCLEDSEALL</sequence>
<comment type="catalytic activity">
    <reaction evidence="3">
        <text>L-tyrosyl-[protein] + ATP = O-phospho-L-tyrosyl-[protein] + ADP + H(+)</text>
        <dbReference type="Rhea" id="RHEA:10596"/>
        <dbReference type="Rhea" id="RHEA-COMP:10136"/>
        <dbReference type="Rhea" id="RHEA-COMP:20101"/>
        <dbReference type="ChEBI" id="CHEBI:15378"/>
        <dbReference type="ChEBI" id="CHEBI:30616"/>
        <dbReference type="ChEBI" id="CHEBI:46858"/>
        <dbReference type="ChEBI" id="CHEBI:61978"/>
        <dbReference type="ChEBI" id="CHEBI:456216"/>
        <dbReference type="EC" id="2.7.10.1"/>
    </reaction>
</comment>
<comment type="subcellular location">
    <subcellularLocation>
        <location>Host cell membrane</location>
    </subcellularLocation>
</comment>
<comment type="miscellaneous">
    <text>This protein is synthesized as an Env-Ryk polyprotein. An Env-Ryk precursor fusion protein is first synthesized and then cellular protease cleaves this precursor into gp85 and the putative oncogene termed gp69 (gp37-Ryk).</text>
</comment>
<comment type="similarity">
    <text evidence="2">Belongs to the protein kinase superfamily. Tyr protein kinase family. AXL/UFO subfamily.</text>
</comment>
<comment type="sequence caution" evidence="4">
    <conflict type="erroneous initiation">
        <sequence resource="EMBL-CDS" id="AAA42673"/>
    </conflict>
</comment>
<protein>
    <recommendedName>
        <fullName>Tyrosine-protein kinase transforming protein RYK</fullName>
        <ecNumber>2.7.10.1</ecNumber>
    </recommendedName>
</protein>
<feature type="chain" id="PRO_0000088135" description="Tyrosine-protein kinase transforming protein RYK">
    <location>
        <begin position="1"/>
        <end position="442"/>
    </location>
</feature>
<feature type="domain" description="Protein kinase" evidence="2">
    <location>
        <begin position="45"/>
        <end position="316"/>
    </location>
</feature>
<feature type="active site" description="Proton acceptor" evidence="2 3">
    <location>
        <position position="181"/>
    </location>
</feature>
<feature type="binding site" evidence="2">
    <location>
        <begin position="51"/>
        <end position="59"/>
    </location>
    <ligand>
        <name>ATP</name>
        <dbReference type="ChEBI" id="CHEBI:30616"/>
    </ligand>
</feature>
<feature type="binding site" evidence="2">
    <location>
        <position position="77"/>
    </location>
    <ligand>
        <name>ATP</name>
        <dbReference type="ChEBI" id="CHEBI:30616"/>
    </ligand>
</feature>
<feature type="modified residue" description="Phosphotyrosine; by autocatalysis" evidence="1">
    <location>
        <position position="212"/>
    </location>
</feature>
<organismHost>
    <name type="scientific">Galliformes</name>
    <dbReference type="NCBI Taxonomy" id="8976"/>
</organismHost>
<name>RYK_AVIR3</name>